<keyword id="KW-0067">ATP-binding</keyword>
<keyword id="KW-0342">GTP-binding</keyword>
<keyword id="KW-0547">Nucleotide-binding</keyword>
<keyword id="KW-1185">Reference proteome</keyword>
<evidence type="ECO:0000255" key="1">
    <source>
        <dbReference type="HAMAP-Rule" id="MF_00636"/>
    </source>
</evidence>
<name>Y1159_FERNB</name>
<gene>
    <name type="ordered locus">Fnod_1159</name>
</gene>
<dbReference type="EMBL" id="CP000771">
    <property type="protein sequence ID" value="ABS61006.1"/>
    <property type="molecule type" value="Genomic_DNA"/>
</dbReference>
<dbReference type="RefSeq" id="WP_011994319.1">
    <property type="nucleotide sequence ID" value="NC_009718.1"/>
</dbReference>
<dbReference type="SMR" id="A7HM73"/>
<dbReference type="STRING" id="381764.Fnod_1159"/>
<dbReference type="KEGG" id="fno:Fnod_1159"/>
<dbReference type="eggNOG" id="COG1660">
    <property type="taxonomic scope" value="Bacteria"/>
</dbReference>
<dbReference type="HOGENOM" id="CLU_059558_0_0_0"/>
<dbReference type="OrthoDB" id="9784461at2"/>
<dbReference type="Proteomes" id="UP000002415">
    <property type="component" value="Chromosome"/>
</dbReference>
<dbReference type="GO" id="GO:0005524">
    <property type="term" value="F:ATP binding"/>
    <property type="evidence" value="ECO:0007669"/>
    <property type="project" value="UniProtKB-UniRule"/>
</dbReference>
<dbReference type="GO" id="GO:0005525">
    <property type="term" value="F:GTP binding"/>
    <property type="evidence" value="ECO:0007669"/>
    <property type="project" value="UniProtKB-UniRule"/>
</dbReference>
<dbReference type="Gene3D" id="3.40.50.300">
    <property type="entry name" value="P-loop containing nucleotide triphosphate hydrolases"/>
    <property type="match status" value="1"/>
</dbReference>
<dbReference type="HAMAP" id="MF_00636">
    <property type="entry name" value="RapZ_like"/>
    <property type="match status" value="1"/>
</dbReference>
<dbReference type="InterPro" id="IPR027417">
    <property type="entry name" value="P-loop_NTPase"/>
</dbReference>
<dbReference type="InterPro" id="IPR005337">
    <property type="entry name" value="RapZ-like"/>
</dbReference>
<dbReference type="InterPro" id="IPR053930">
    <property type="entry name" value="RapZ-like_N"/>
</dbReference>
<dbReference type="InterPro" id="IPR053931">
    <property type="entry name" value="RapZ_C"/>
</dbReference>
<dbReference type="NCBIfam" id="NF003828">
    <property type="entry name" value="PRK05416.1"/>
    <property type="match status" value="1"/>
</dbReference>
<dbReference type="PANTHER" id="PTHR30448">
    <property type="entry name" value="RNASE ADAPTER PROTEIN RAPZ"/>
    <property type="match status" value="1"/>
</dbReference>
<dbReference type="PANTHER" id="PTHR30448:SF0">
    <property type="entry name" value="RNASE ADAPTER PROTEIN RAPZ"/>
    <property type="match status" value="1"/>
</dbReference>
<dbReference type="Pfam" id="PF22740">
    <property type="entry name" value="PapZ_C"/>
    <property type="match status" value="1"/>
</dbReference>
<dbReference type="Pfam" id="PF03668">
    <property type="entry name" value="RapZ-like_N"/>
    <property type="match status" value="1"/>
</dbReference>
<dbReference type="PIRSF" id="PIRSF005052">
    <property type="entry name" value="P-loopkin"/>
    <property type="match status" value="1"/>
</dbReference>
<dbReference type="SUPFAM" id="SSF52540">
    <property type="entry name" value="P-loop containing nucleoside triphosphate hydrolases"/>
    <property type="match status" value="1"/>
</dbReference>
<accession>A7HM73</accession>
<feature type="chain" id="PRO_1000072675" description="Nucleotide-binding protein Fnod_1159">
    <location>
        <begin position="1"/>
        <end position="282"/>
    </location>
</feature>
<feature type="binding site" evidence="1">
    <location>
        <begin position="9"/>
        <end position="16"/>
    </location>
    <ligand>
        <name>ATP</name>
        <dbReference type="ChEBI" id="CHEBI:30616"/>
    </ligand>
</feature>
<feature type="binding site" evidence="1">
    <location>
        <begin position="57"/>
        <end position="60"/>
    </location>
    <ligand>
        <name>GTP</name>
        <dbReference type="ChEBI" id="CHEBI:37565"/>
    </ligand>
</feature>
<proteinExistence type="inferred from homology"/>
<comment type="function">
    <text evidence="1">Displays ATPase and GTPase activities.</text>
</comment>
<comment type="similarity">
    <text evidence="1">Belongs to the RapZ-like family.</text>
</comment>
<protein>
    <recommendedName>
        <fullName evidence="1">Nucleotide-binding protein Fnod_1159</fullName>
    </recommendedName>
</protein>
<sequence>MKELVILTGHSGAGKSTAAGLLEDLGFFCIDNLPPEVVYQVASILSNNVDKLAIVLDIRSYLFGNIQNAIKDVKERYPFTKVLFLTAAKDTLIQRFAHTRRSHPLSKQTNSIGEAIELEFEIMKEIMEIADLVIDTTMLNPHQLRTKLTTFLEEKSEKTFVVHVISFGFKYGMPLDADFVFDARFFPNPFYINELRPKTGKDEEVKEFLRKIDGVSEYLNKIYELINIAISRYETEGRKEITVAIGCTGGKHRSVYFAEELGQMFLNKDYKVTIEHRDVELG</sequence>
<reference key="1">
    <citation type="submission" date="2007-07" db="EMBL/GenBank/DDBJ databases">
        <title>Complete sequence of Fervidobacterium nodosum Rt17-B1.</title>
        <authorList>
            <consortium name="US DOE Joint Genome Institute"/>
            <person name="Copeland A."/>
            <person name="Lucas S."/>
            <person name="Lapidus A."/>
            <person name="Barry K."/>
            <person name="Glavina del Rio T."/>
            <person name="Dalin E."/>
            <person name="Tice H."/>
            <person name="Pitluck S."/>
            <person name="Saunders E."/>
            <person name="Brettin T."/>
            <person name="Bruce D."/>
            <person name="Detter J.C."/>
            <person name="Han C."/>
            <person name="Schmutz J."/>
            <person name="Larimer F."/>
            <person name="Land M."/>
            <person name="Hauser L."/>
            <person name="Kyrpides N."/>
            <person name="Mikhailova N."/>
            <person name="Nelson K."/>
            <person name="Gogarten J.P."/>
            <person name="Noll K."/>
            <person name="Richardson P."/>
        </authorList>
    </citation>
    <scope>NUCLEOTIDE SEQUENCE [LARGE SCALE GENOMIC DNA]</scope>
    <source>
        <strain>ATCC 35602 / DSM 5306 / Rt17-B1</strain>
    </source>
</reference>
<organism>
    <name type="scientific">Fervidobacterium nodosum (strain ATCC 35602 / DSM 5306 / Rt17-B1)</name>
    <dbReference type="NCBI Taxonomy" id="381764"/>
    <lineage>
        <taxon>Bacteria</taxon>
        <taxon>Thermotogati</taxon>
        <taxon>Thermotogota</taxon>
        <taxon>Thermotogae</taxon>
        <taxon>Thermotogales</taxon>
        <taxon>Fervidobacteriaceae</taxon>
        <taxon>Fervidobacterium</taxon>
    </lineage>
</organism>